<evidence type="ECO:0000255" key="1"/>
<evidence type="ECO:0000256" key="2">
    <source>
        <dbReference type="SAM" id="MobiDB-lite"/>
    </source>
</evidence>
<evidence type="ECO:0000269" key="3">
    <source>
    </source>
</evidence>
<evidence type="ECO:0000269" key="4">
    <source>
    </source>
</evidence>
<evidence type="ECO:0000269" key="5">
    <source>
    </source>
</evidence>
<evidence type="ECO:0000269" key="6">
    <source>
    </source>
</evidence>
<evidence type="ECO:0000269" key="7">
    <source>
    </source>
</evidence>
<evidence type="ECO:0000269" key="8">
    <source>
    </source>
</evidence>
<evidence type="ECO:0000269" key="9">
    <source>
    </source>
</evidence>
<evidence type="ECO:0000269" key="10">
    <source>
    </source>
</evidence>
<evidence type="ECO:0000269" key="11">
    <source>
    </source>
</evidence>
<evidence type="ECO:0000269" key="12">
    <source>
    </source>
</evidence>
<evidence type="ECO:0000269" key="13">
    <source>
    </source>
</evidence>
<evidence type="ECO:0000269" key="14">
    <source>
    </source>
</evidence>
<evidence type="ECO:0000305" key="15"/>
<keyword id="KW-1185">Reference proteome</keyword>
<keyword id="KW-0964">Secreted</keyword>
<keyword id="KW-0732">Signal</keyword>
<keyword id="KW-0843">Virulence</keyword>
<feature type="signal peptide" evidence="1">
    <location>
        <begin position="1"/>
        <end position="19"/>
    </location>
</feature>
<feature type="chain" id="PRO_0000424914" description="Secreted protein RBT4">
    <location>
        <begin position="20"/>
        <end position="358"/>
    </location>
</feature>
<feature type="domain" description="SCP">
    <location>
        <begin position="216"/>
        <end position="332"/>
    </location>
</feature>
<feature type="region of interest" description="Disordered" evidence="2">
    <location>
        <begin position="48"/>
        <end position="98"/>
    </location>
</feature>
<feature type="region of interest" description="Disordered" evidence="2">
    <location>
        <begin position="144"/>
        <end position="203"/>
    </location>
</feature>
<feature type="compositionally biased region" description="Low complexity" evidence="2">
    <location>
        <begin position="48"/>
        <end position="63"/>
    </location>
</feature>
<feature type="compositionally biased region" description="Low complexity" evidence="2">
    <location>
        <begin position="153"/>
        <end position="174"/>
    </location>
</feature>
<feature type="compositionally biased region" description="Low complexity" evidence="2">
    <location>
        <begin position="189"/>
        <end position="200"/>
    </location>
</feature>
<comment type="function">
    <text evidence="4 9 10 14">Secreted protein that acts as a virulence factor during infections such as in posttraumatic corneal infections. Acts as an important antigen in patients with systemic candidiasis and plays a role in the protection against phagocyte attack.</text>
</comment>
<comment type="subcellular location">
    <subcellularLocation>
        <location evidence="11 12 14">Secreted</location>
    </subcellularLocation>
</comment>
<comment type="induction">
    <text evidence="3 4 5 6 7 8 12 13 14">Induced during the switch from the yeast form to filamentous growth and by fluconazole. Expression is negatively regulated by CPH2, EFG1, RFG1, and TUP1.</text>
</comment>
<comment type="similarity">
    <text evidence="15">Belongs to the CRISP family.</text>
</comment>
<proteinExistence type="evidence at protein level"/>
<sequence length="358" mass="37449">MKFSQVATTAAIFAGLTTAEIAYVTQTRGVTVGETATVATTVTVGATVTGGDQGQDQVQQSAAPEAGDIQQSAVPEADDIQQSAVPEAEPTADADGGNGIAITEVFTTTIMGQEIVYSGVYYSYGEEHTYGDVQVQTLTIGGGGFPSDDQYPTTEVSAEASPSAVTTSSAVATPDAKVPDSTKDASQPAATTASGSSSGSNDFSGVKDTQFAQQILDAHNKKRARHGVPDLTWDATVYEYAQKFADQYSCSGNLQHSGGKYGENLAVGYADGAAALQAWYEEAGKDGLSYSYGSSSVYNHFTQVVWKSTTKLGCAYKDCRAQNWGLYVVCSYDPAGNVMGTDPKTGKSYMAENVLRPQ</sequence>
<name>RBT4_CANAL</name>
<dbReference type="EMBL" id="CP017623">
    <property type="protein sequence ID" value="AOW26355.1"/>
    <property type="molecule type" value="Genomic_DNA"/>
</dbReference>
<dbReference type="RefSeq" id="XP_718792.2">
    <property type="nucleotide sequence ID" value="XM_713699.2"/>
</dbReference>
<dbReference type="SMR" id="Q5AB48"/>
<dbReference type="FunCoup" id="Q5AB48">
    <property type="interactions" value="57"/>
</dbReference>
<dbReference type="STRING" id="237561.Q5AB48"/>
<dbReference type="EnsemblFungi" id="C1_07030C_A-T">
    <property type="protein sequence ID" value="C1_07030C_A-T-p1"/>
    <property type="gene ID" value="C1_07030C_A"/>
</dbReference>
<dbReference type="GeneID" id="3639534"/>
<dbReference type="KEGG" id="cal:CAALFM_C107030CA"/>
<dbReference type="CGD" id="CAL0000174557">
    <property type="gene designation" value="RBT4"/>
</dbReference>
<dbReference type="VEuPathDB" id="FungiDB:C1_07030C_A"/>
<dbReference type="eggNOG" id="KOG3017">
    <property type="taxonomic scope" value="Eukaryota"/>
</dbReference>
<dbReference type="HOGENOM" id="CLU_035730_3_0_1"/>
<dbReference type="InParanoid" id="Q5AB48"/>
<dbReference type="OrthoDB" id="337038at2759"/>
<dbReference type="PRO" id="PR:Q5AB48"/>
<dbReference type="Proteomes" id="UP000000559">
    <property type="component" value="Chromosome 1"/>
</dbReference>
<dbReference type="GO" id="GO:0009986">
    <property type="term" value="C:cell surface"/>
    <property type="evidence" value="ECO:0000314"/>
    <property type="project" value="CGD"/>
</dbReference>
<dbReference type="GO" id="GO:0005576">
    <property type="term" value="C:extracellular region"/>
    <property type="evidence" value="ECO:0000314"/>
    <property type="project" value="CGD"/>
</dbReference>
<dbReference type="GO" id="GO:0005615">
    <property type="term" value="C:extracellular space"/>
    <property type="evidence" value="ECO:0000318"/>
    <property type="project" value="GO_Central"/>
</dbReference>
<dbReference type="GO" id="GO:1903561">
    <property type="term" value="C:extracellular vesicle"/>
    <property type="evidence" value="ECO:0000314"/>
    <property type="project" value="CGD"/>
</dbReference>
<dbReference type="GO" id="GO:0015485">
    <property type="term" value="F:cholesterol binding"/>
    <property type="evidence" value="ECO:0000314"/>
    <property type="project" value="CGD"/>
</dbReference>
<dbReference type="GO" id="GO:0019953">
    <property type="term" value="P:sexual reproduction"/>
    <property type="evidence" value="ECO:0000318"/>
    <property type="project" value="GO_Central"/>
</dbReference>
<dbReference type="CDD" id="cd05384">
    <property type="entry name" value="CAP_PRY1-like"/>
    <property type="match status" value="1"/>
</dbReference>
<dbReference type="FunFam" id="3.40.33.10:FF:000012">
    <property type="entry name" value="Secreted protein PRY1"/>
    <property type="match status" value="1"/>
</dbReference>
<dbReference type="Gene3D" id="3.40.33.10">
    <property type="entry name" value="CAP"/>
    <property type="match status" value="1"/>
</dbReference>
<dbReference type="InterPro" id="IPR018244">
    <property type="entry name" value="Allrgn_V5/Tpx1_CS"/>
</dbReference>
<dbReference type="InterPro" id="IPR014044">
    <property type="entry name" value="CAP_dom"/>
</dbReference>
<dbReference type="InterPro" id="IPR035940">
    <property type="entry name" value="CAP_sf"/>
</dbReference>
<dbReference type="InterPro" id="IPR001283">
    <property type="entry name" value="CRISP-related"/>
</dbReference>
<dbReference type="PANTHER" id="PTHR10334">
    <property type="entry name" value="CYSTEINE-RICH SECRETORY PROTEIN-RELATED"/>
    <property type="match status" value="1"/>
</dbReference>
<dbReference type="Pfam" id="PF00188">
    <property type="entry name" value="CAP"/>
    <property type="match status" value="1"/>
</dbReference>
<dbReference type="PRINTS" id="PR00837">
    <property type="entry name" value="V5TPXLIKE"/>
</dbReference>
<dbReference type="SMART" id="SM00198">
    <property type="entry name" value="SCP"/>
    <property type="match status" value="1"/>
</dbReference>
<dbReference type="SUPFAM" id="SSF55797">
    <property type="entry name" value="PR-1-like"/>
    <property type="match status" value="1"/>
</dbReference>
<dbReference type="PROSITE" id="PS01010">
    <property type="entry name" value="CRISP_2"/>
    <property type="match status" value="1"/>
</dbReference>
<gene>
    <name type="primary">RBT4</name>
    <name type="synonym">PRY4</name>
    <name type="ordered locus">CAALFM_C107030CA</name>
    <name type="ORF">CaO19.13583</name>
    <name type="ORF">CaO19.6202</name>
</gene>
<reference key="1">
    <citation type="journal article" date="2004" name="Proc. Natl. Acad. Sci. U.S.A.">
        <title>The diploid genome sequence of Candida albicans.</title>
        <authorList>
            <person name="Jones T."/>
            <person name="Federspiel N.A."/>
            <person name="Chibana H."/>
            <person name="Dungan J."/>
            <person name="Kalman S."/>
            <person name="Magee B.B."/>
            <person name="Newport G."/>
            <person name="Thorstenson Y.R."/>
            <person name="Agabian N."/>
            <person name="Magee P.T."/>
            <person name="Davis R.W."/>
            <person name="Scherer S."/>
        </authorList>
    </citation>
    <scope>NUCLEOTIDE SEQUENCE [LARGE SCALE GENOMIC DNA]</scope>
    <source>
        <strain>SC5314 / ATCC MYA-2876</strain>
    </source>
</reference>
<reference key="2">
    <citation type="journal article" date="2007" name="Genome Biol.">
        <title>Assembly of the Candida albicans genome into sixteen supercontigs aligned on the eight chromosomes.</title>
        <authorList>
            <person name="van het Hoog M."/>
            <person name="Rast T.J."/>
            <person name="Martchenko M."/>
            <person name="Grindle S."/>
            <person name="Dignard D."/>
            <person name="Hogues H."/>
            <person name="Cuomo C."/>
            <person name="Berriman M."/>
            <person name="Scherer S."/>
            <person name="Magee B.B."/>
            <person name="Whiteway M."/>
            <person name="Chibana H."/>
            <person name="Nantel A."/>
            <person name="Magee P.T."/>
        </authorList>
    </citation>
    <scope>GENOME REANNOTATION</scope>
    <source>
        <strain>SC5314 / ATCC MYA-2876</strain>
    </source>
</reference>
<reference key="3">
    <citation type="journal article" date="2013" name="Genome Biol.">
        <title>Assembly of a phased diploid Candida albicans genome facilitates allele-specific measurements and provides a simple model for repeat and indel structure.</title>
        <authorList>
            <person name="Muzzey D."/>
            <person name="Schwartz K."/>
            <person name="Weissman J.S."/>
            <person name="Sherlock G."/>
        </authorList>
    </citation>
    <scope>NUCLEOTIDE SEQUENCE [LARGE SCALE GENOMIC DNA]</scope>
    <scope>GENOME REANNOTATION</scope>
    <source>
        <strain>SC5314 / ATCC MYA-2876</strain>
    </source>
</reference>
<reference key="4">
    <citation type="journal article" date="2000" name="Genetics">
        <title>TUP1, CPH1 and EFG1 make independent contributions to filamentation in Candida albicans.</title>
        <authorList>
            <person name="Braun B.R."/>
            <person name="Johnson A.D."/>
        </authorList>
    </citation>
    <scope>INDUCTION</scope>
</reference>
<reference key="5">
    <citation type="journal article" date="2000" name="Genetics">
        <title>Identification and characterization of TUP1-regulated genes in Candida albicans.</title>
        <authorList>
            <person name="Braun B.R."/>
            <person name="Head W.S."/>
            <person name="Wang M.X."/>
            <person name="Johnson A.D."/>
        </authorList>
    </citation>
    <scope>INDUCTION</scope>
    <scope>FUNCTION</scope>
</reference>
<reference key="6">
    <citation type="journal article" date="2001" name="J. Bacteriol.">
        <title>Efg1, a morphogenetic regulator in Candida albicans, is a sequence-specific DNA binding protein.</title>
        <authorList>
            <person name="Leng P."/>
            <person name="Lee P.R."/>
            <person name="Wu H."/>
            <person name="Brown A.J."/>
        </authorList>
    </citation>
    <scope>INDUCTION</scope>
</reference>
<reference key="7">
    <citation type="journal article" date="2001" name="Mol. Cell. Biol.">
        <title>Rfg1, a protein related to the Saccharomyces cerevisiae hypoxic regulator Rox1, controls filamentous growth and virulence in Candida albicans.</title>
        <authorList>
            <person name="Kadosh D."/>
            <person name="Johnson A.D."/>
        </authorList>
    </citation>
    <scope>INDUCTION</scope>
</reference>
<reference key="8">
    <citation type="journal article" date="2001" name="Mol. Cell. Biol.">
        <title>The basic helix-loop-helix transcription factor Cph2 regulates hyphal development in Candida albicans partly via TEC1.</title>
        <authorList>
            <person name="Lane S."/>
            <person name="Zhou S."/>
            <person name="Pan T."/>
            <person name="Dai Q."/>
            <person name="Liu H."/>
        </authorList>
    </citation>
    <scope>INDUCTION</scope>
</reference>
<reference key="9">
    <citation type="journal article" date="2002" name="Mol. Biol. Cell">
        <title>Transcription profiling of Candida albicans cells undergoing the yeast-to-hyphal transition.</title>
        <authorList>
            <person name="Nantel A."/>
            <person name="Dignard D."/>
            <person name="Bachewich C."/>
            <person name="Harcus D."/>
            <person name="Marcil A."/>
            <person name="Bouin A.P."/>
            <person name="Sensen C.W."/>
            <person name="Hogues H."/>
            <person name="van het Hoog M."/>
            <person name="Gordon P."/>
            <person name="Rigby T."/>
            <person name="Benoit F."/>
            <person name="Tessier D.C."/>
            <person name="Thomas D.Y."/>
            <person name="Whiteway M."/>
        </authorList>
    </citation>
    <scope>INDUCTION</scope>
</reference>
<reference key="10">
    <citation type="journal article" date="2007" name="Invest. Ophthalmol. Vis. Sci.">
        <title>Corneal virulence of Candida albicans strains deficient in Tup1-regulated genes.</title>
        <authorList>
            <person name="Jackson B.E."/>
            <person name="Mitchell B.M."/>
            <person name="Wilhelmus K.R."/>
        </authorList>
    </citation>
    <scope>FUNCTION</scope>
</reference>
<reference key="11">
    <citation type="journal article" date="2008" name="J. Clin. Microbiol.">
        <title>Immunoglobulin G responses to a panel of Candida albicans antigens as accurate and early markers for the presence of systemic candidiasis.</title>
        <authorList>
            <person name="Clancy C.J."/>
            <person name="Nguyen M.L."/>
            <person name="Cheng S."/>
            <person name="Huang H."/>
            <person name="Fan G."/>
            <person name="Jaber R.A."/>
            <person name="Wingard J.R."/>
            <person name="Cline C."/>
            <person name="Nguyen M.H."/>
        </authorList>
    </citation>
    <scope>FUNCTION AS AN ANTIGEN</scope>
</reference>
<reference key="12">
    <citation type="journal article" date="2010" name="J. Proteomics">
        <title>Identification of Candida albicans exposed surface proteins in vivo by a rapid proteomic approach.</title>
        <authorList>
            <person name="Hernaez M.L."/>
            <person name="Ximenez-Embun P."/>
            <person name="Martinez-Gomariz M."/>
            <person name="Gutierrez-Blazquez M.D."/>
            <person name="Nombela C."/>
            <person name="Gil C."/>
        </authorList>
    </citation>
    <scope>IDENTIFICATION BY MASS SPECTROMETRY</scope>
    <scope>SUBCELLULAR LOCATION</scope>
</reference>
<reference key="13">
    <citation type="journal article" date="2011" name="Eukaryot. Cell">
        <title>Effects of fluconazole on the secretome, the wall proteome, and wall integrity of the clinical fungus Candida albicans.</title>
        <authorList>
            <person name="Sorgo A.G."/>
            <person name="Heilmann C.J."/>
            <person name="Dekker H.L."/>
            <person name="Bekker M."/>
            <person name="Brul S."/>
            <person name="de Koster C.G."/>
            <person name="de Koning L.J."/>
            <person name="Klis F.M."/>
        </authorList>
    </citation>
    <scope>IDENTIFICATION BY MASS SPECTROMETRY</scope>
    <scope>SUBCELLULAR LOCATION</scope>
    <scope>INDUCTION</scope>
</reference>
<reference key="14">
    <citation type="journal article" date="2013" name="Eukaryot. Cell">
        <title>Normal adaptation of Candida albicans to the murine gastrointestinal tract requires Efg1p-dependent regulation of metabolic and host defense genes.</title>
        <authorList>
            <person name="Pierce J.V."/>
            <person name="Dignard D."/>
            <person name="Whiteway M."/>
            <person name="Kumamoto C.A."/>
        </authorList>
    </citation>
    <scope>INDUCTION</scope>
</reference>
<reference key="15">
    <citation type="journal article" date="2013" name="Mol. Microbiol.">
        <title>A family of secreted pathogenesis-related proteins in Candida albicans.</title>
        <authorList>
            <person name="Rohm M."/>
            <person name="Lindemann E."/>
            <person name="Hiller E."/>
            <person name="Ermert D."/>
            <person name="Lemuth K."/>
            <person name="Trkulja D."/>
            <person name="Sogukpinar O."/>
            <person name="Brunner H."/>
            <person name="Rupp S."/>
            <person name="Urban C.F."/>
            <person name="Sohn K."/>
        </authorList>
    </citation>
    <scope>IDENTIFICATION BY MASS SPECTROMETRY</scope>
    <scope>SUBCELLULAR LOCATION</scope>
    <scope>FUNCTION</scope>
    <scope>INDUCTION</scope>
</reference>
<organism>
    <name type="scientific">Candida albicans (strain SC5314 / ATCC MYA-2876)</name>
    <name type="common">Yeast</name>
    <dbReference type="NCBI Taxonomy" id="237561"/>
    <lineage>
        <taxon>Eukaryota</taxon>
        <taxon>Fungi</taxon>
        <taxon>Dikarya</taxon>
        <taxon>Ascomycota</taxon>
        <taxon>Saccharomycotina</taxon>
        <taxon>Pichiomycetes</taxon>
        <taxon>Debaryomycetaceae</taxon>
        <taxon>Candida/Lodderomyces clade</taxon>
        <taxon>Candida</taxon>
    </lineage>
</organism>
<accession>Q5AB48</accession>
<accession>A0A1D8PDY8</accession>
<accession>Q5AAV8</accession>
<protein>
    <recommendedName>
        <fullName>Secreted protein RBT4</fullName>
    </recommendedName>
    <alternativeName>
        <fullName>PRY family protein 4</fullName>
    </alternativeName>
    <alternativeName>
        <fullName>Repressed by TUP1 protein 4</fullName>
    </alternativeName>
</protein>